<proteinExistence type="inferred from homology"/>
<reference key="1">
    <citation type="journal article" date="2003" name="Nature">
        <title>The genome of a motile marine Synechococcus.</title>
        <authorList>
            <person name="Palenik B."/>
            <person name="Brahamsha B."/>
            <person name="Larimer F.W."/>
            <person name="Land M.L."/>
            <person name="Hauser L."/>
            <person name="Chain P."/>
            <person name="Lamerdin J.E."/>
            <person name="Regala W."/>
            <person name="Allen E.E."/>
            <person name="McCarren J."/>
            <person name="Paulsen I.T."/>
            <person name="Dufresne A."/>
            <person name="Partensky F."/>
            <person name="Webb E.A."/>
            <person name="Waterbury J."/>
        </authorList>
    </citation>
    <scope>NUCLEOTIDE SEQUENCE [LARGE SCALE GENOMIC DNA]</scope>
    <source>
        <strain>WH8102</strain>
    </source>
</reference>
<protein>
    <recommendedName>
        <fullName evidence="1">5'-nucleotidase SurE</fullName>
        <ecNumber evidence="1">3.1.3.5</ecNumber>
    </recommendedName>
    <alternativeName>
        <fullName evidence="1">Nucleoside 5'-monophosphate phosphohydrolase</fullName>
    </alternativeName>
</protein>
<organism>
    <name type="scientific">Parasynechococcus marenigrum (strain WH8102)</name>
    <dbReference type="NCBI Taxonomy" id="84588"/>
    <lineage>
        <taxon>Bacteria</taxon>
        <taxon>Bacillati</taxon>
        <taxon>Cyanobacteriota</taxon>
        <taxon>Cyanophyceae</taxon>
        <taxon>Synechococcales</taxon>
        <taxon>Prochlorococcaceae</taxon>
        <taxon>Parasynechococcus</taxon>
        <taxon>Parasynechococcus marenigrum</taxon>
    </lineage>
</organism>
<gene>
    <name evidence="1" type="primary">surE</name>
    <name type="ordered locus">SYNW1601</name>
</gene>
<name>SURE_PARMW</name>
<evidence type="ECO:0000255" key="1">
    <source>
        <dbReference type="HAMAP-Rule" id="MF_00060"/>
    </source>
</evidence>
<keyword id="KW-0963">Cytoplasm</keyword>
<keyword id="KW-0378">Hydrolase</keyword>
<keyword id="KW-0479">Metal-binding</keyword>
<keyword id="KW-0547">Nucleotide-binding</keyword>
<feature type="chain" id="PRO_0000111844" description="5'-nucleotidase SurE">
    <location>
        <begin position="1"/>
        <end position="266"/>
    </location>
</feature>
<feature type="binding site" evidence="1">
    <location>
        <position position="8"/>
    </location>
    <ligand>
        <name>a divalent metal cation</name>
        <dbReference type="ChEBI" id="CHEBI:60240"/>
    </ligand>
</feature>
<feature type="binding site" evidence="1">
    <location>
        <position position="9"/>
    </location>
    <ligand>
        <name>a divalent metal cation</name>
        <dbReference type="ChEBI" id="CHEBI:60240"/>
    </ligand>
</feature>
<feature type="binding site" evidence="1">
    <location>
        <position position="40"/>
    </location>
    <ligand>
        <name>a divalent metal cation</name>
        <dbReference type="ChEBI" id="CHEBI:60240"/>
    </ligand>
</feature>
<feature type="binding site" evidence="1">
    <location>
        <position position="98"/>
    </location>
    <ligand>
        <name>a divalent metal cation</name>
        <dbReference type="ChEBI" id="CHEBI:60240"/>
    </ligand>
</feature>
<sequence>MRVLISNDDGVFAEGIRTLAAAAVARGHDVTVVCPDQERSATGHGLTLQTPIRAERADELFVPGVTAWACSGTPADCMKLALFELVKDKPDLVLSGINHGPNLGTDVFCSGTVAAAMEGTLEGIPSMAISSACFQWRQFQAGAELAVEVAEQALADQWPENLLLNLNIPPCNRDAMGPLRWTRLSIRRYDEQFSSRVDPRGRAYYWLAGEVVNDLESAGEGPRDWPSDVAQIHANSPSLTPIQPDLFWRGSLSGLPQLKLKDQLVR</sequence>
<dbReference type="EC" id="3.1.3.5" evidence="1"/>
<dbReference type="EMBL" id="BX569693">
    <property type="protein sequence ID" value="CAE08116.1"/>
    <property type="molecule type" value="Genomic_DNA"/>
</dbReference>
<dbReference type="RefSeq" id="WP_011128465.1">
    <property type="nucleotide sequence ID" value="NC_005070.1"/>
</dbReference>
<dbReference type="SMR" id="Q7U5U4"/>
<dbReference type="STRING" id="84588.SYNW1601"/>
<dbReference type="KEGG" id="syw:SYNW1601"/>
<dbReference type="eggNOG" id="COG0496">
    <property type="taxonomic scope" value="Bacteria"/>
</dbReference>
<dbReference type="HOGENOM" id="CLU_045192_1_3_3"/>
<dbReference type="Proteomes" id="UP000001422">
    <property type="component" value="Chromosome"/>
</dbReference>
<dbReference type="GO" id="GO:0005737">
    <property type="term" value="C:cytoplasm"/>
    <property type="evidence" value="ECO:0007669"/>
    <property type="project" value="UniProtKB-SubCell"/>
</dbReference>
<dbReference type="GO" id="GO:0008254">
    <property type="term" value="F:3'-nucleotidase activity"/>
    <property type="evidence" value="ECO:0007669"/>
    <property type="project" value="TreeGrafter"/>
</dbReference>
<dbReference type="GO" id="GO:0008253">
    <property type="term" value="F:5'-nucleotidase activity"/>
    <property type="evidence" value="ECO:0007669"/>
    <property type="project" value="UniProtKB-UniRule"/>
</dbReference>
<dbReference type="GO" id="GO:0004309">
    <property type="term" value="F:exopolyphosphatase activity"/>
    <property type="evidence" value="ECO:0007669"/>
    <property type="project" value="TreeGrafter"/>
</dbReference>
<dbReference type="GO" id="GO:0046872">
    <property type="term" value="F:metal ion binding"/>
    <property type="evidence" value="ECO:0007669"/>
    <property type="project" value="UniProtKB-UniRule"/>
</dbReference>
<dbReference type="GO" id="GO:0000166">
    <property type="term" value="F:nucleotide binding"/>
    <property type="evidence" value="ECO:0007669"/>
    <property type="project" value="UniProtKB-KW"/>
</dbReference>
<dbReference type="Gene3D" id="3.40.1210.10">
    <property type="entry name" value="Survival protein SurE-like phosphatase/nucleotidase"/>
    <property type="match status" value="1"/>
</dbReference>
<dbReference type="HAMAP" id="MF_00060">
    <property type="entry name" value="SurE"/>
    <property type="match status" value="1"/>
</dbReference>
<dbReference type="InterPro" id="IPR030048">
    <property type="entry name" value="SurE"/>
</dbReference>
<dbReference type="InterPro" id="IPR002828">
    <property type="entry name" value="SurE-like_Pase/nucleotidase"/>
</dbReference>
<dbReference type="InterPro" id="IPR036523">
    <property type="entry name" value="SurE-like_sf"/>
</dbReference>
<dbReference type="NCBIfam" id="NF001490">
    <property type="entry name" value="PRK00346.1-4"/>
    <property type="match status" value="1"/>
</dbReference>
<dbReference type="NCBIfam" id="NF001492">
    <property type="entry name" value="PRK00346.2-2"/>
    <property type="match status" value="1"/>
</dbReference>
<dbReference type="NCBIfam" id="TIGR00087">
    <property type="entry name" value="surE"/>
    <property type="match status" value="1"/>
</dbReference>
<dbReference type="PANTHER" id="PTHR30457">
    <property type="entry name" value="5'-NUCLEOTIDASE SURE"/>
    <property type="match status" value="1"/>
</dbReference>
<dbReference type="PANTHER" id="PTHR30457:SF12">
    <property type="entry name" value="5'_3'-NUCLEOTIDASE SURE"/>
    <property type="match status" value="1"/>
</dbReference>
<dbReference type="Pfam" id="PF01975">
    <property type="entry name" value="SurE"/>
    <property type="match status" value="1"/>
</dbReference>
<dbReference type="SUPFAM" id="SSF64167">
    <property type="entry name" value="SurE-like"/>
    <property type="match status" value="1"/>
</dbReference>
<accession>Q7U5U4</accession>
<comment type="function">
    <text evidence="1">Nucleotidase that shows phosphatase activity on nucleoside 5'-monophosphates.</text>
</comment>
<comment type="catalytic activity">
    <reaction evidence="1">
        <text>a ribonucleoside 5'-phosphate + H2O = a ribonucleoside + phosphate</text>
        <dbReference type="Rhea" id="RHEA:12484"/>
        <dbReference type="ChEBI" id="CHEBI:15377"/>
        <dbReference type="ChEBI" id="CHEBI:18254"/>
        <dbReference type="ChEBI" id="CHEBI:43474"/>
        <dbReference type="ChEBI" id="CHEBI:58043"/>
        <dbReference type="EC" id="3.1.3.5"/>
    </reaction>
</comment>
<comment type="cofactor">
    <cofactor evidence="1">
        <name>a divalent metal cation</name>
        <dbReference type="ChEBI" id="CHEBI:60240"/>
    </cofactor>
    <text evidence="1">Binds 1 divalent metal cation per subunit.</text>
</comment>
<comment type="subcellular location">
    <subcellularLocation>
        <location evidence="1">Cytoplasm</location>
    </subcellularLocation>
</comment>
<comment type="similarity">
    <text evidence="1">Belongs to the SurE nucleotidase family.</text>
</comment>